<organism>
    <name type="scientific">Oceanobacillus iheyensis (strain DSM 14371 / CIP 107618 / JCM 11309 / KCTC 3954 / HTE831)</name>
    <dbReference type="NCBI Taxonomy" id="221109"/>
    <lineage>
        <taxon>Bacteria</taxon>
        <taxon>Bacillati</taxon>
        <taxon>Bacillota</taxon>
        <taxon>Bacilli</taxon>
        <taxon>Bacillales</taxon>
        <taxon>Bacillaceae</taxon>
        <taxon>Oceanobacillus</taxon>
    </lineage>
</organism>
<reference key="1">
    <citation type="journal article" date="2002" name="Nucleic Acids Res.">
        <title>Genome sequence of Oceanobacillus iheyensis isolated from the Iheya Ridge and its unexpected adaptive capabilities to extreme environments.</title>
        <authorList>
            <person name="Takami H."/>
            <person name="Takaki Y."/>
            <person name="Uchiyama I."/>
        </authorList>
    </citation>
    <scope>NUCLEOTIDE SEQUENCE [LARGE SCALE GENOMIC DNA]</scope>
    <source>
        <strain>DSM 14371 / CIP 107618 / JCM 11309 / KCTC 3954 / HTE831</strain>
    </source>
</reference>
<proteinExistence type="inferred from homology"/>
<keyword id="KW-1185">Reference proteome</keyword>
<keyword id="KW-0687">Ribonucleoprotein</keyword>
<keyword id="KW-0689">Ribosomal protein</keyword>
<keyword id="KW-0694">RNA-binding</keyword>
<keyword id="KW-0699">rRNA-binding</keyword>
<dbReference type="EMBL" id="BA000028">
    <property type="protein sequence ID" value="BAC12100.1"/>
    <property type="molecule type" value="Genomic_DNA"/>
</dbReference>
<dbReference type="RefSeq" id="WP_011064545.1">
    <property type="nucleotide sequence ID" value="NC_004193.1"/>
</dbReference>
<dbReference type="SMR" id="P59373"/>
<dbReference type="STRING" id="221109.gene:10732334"/>
<dbReference type="KEGG" id="oih:OB0144"/>
<dbReference type="eggNOG" id="COG0100">
    <property type="taxonomic scope" value="Bacteria"/>
</dbReference>
<dbReference type="HOGENOM" id="CLU_072439_5_0_9"/>
<dbReference type="OrthoDB" id="9806415at2"/>
<dbReference type="PhylomeDB" id="P59373"/>
<dbReference type="Proteomes" id="UP000000822">
    <property type="component" value="Chromosome"/>
</dbReference>
<dbReference type="GO" id="GO:1990904">
    <property type="term" value="C:ribonucleoprotein complex"/>
    <property type="evidence" value="ECO:0007669"/>
    <property type="project" value="UniProtKB-KW"/>
</dbReference>
<dbReference type="GO" id="GO:0005840">
    <property type="term" value="C:ribosome"/>
    <property type="evidence" value="ECO:0007669"/>
    <property type="project" value="UniProtKB-KW"/>
</dbReference>
<dbReference type="GO" id="GO:0019843">
    <property type="term" value="F:rRNA binding"/>
    <property type="evidence" value="ECO:0007669"/>
    <property type="project" value="UniProtKB-UniRule"/>
</dbReference>
<dbReference type="GO" id="GO:0003735">
    <property type="term" value="F:structural constituent of ribosome"/>
    <property type="evidence" value="ECO:0007669"/>
    <property type="project" value="InterPro"/>
</dbReference>
<dbReference type="GO" id="GO:0006412">
    <property type="term" value="P:translation"/>
    <property type="evidence" value="ECO:0007669"/>
    <property type="project" value="UniProtKB-UniRule"/>
</dbReference>
<dbReference type="FunFam" id="3.30.420.80:FF:000001">
    <property type="entry name" value="30S ribosomal protein S11"/>
    <property type="match status" value="1"/>
</dbReference>
<dbReference type="Gene3D" id="3.30.420.80">
    <property type="entry name" value="Ribosomal protein S11"/>
    <property type="match status" value="1"/>
</dbReference>
<dbReference type="HAMAP" id="MF_01310">
    <property type="entry name" value="Ribosomal_uS11"/>
    <property type="match status" value="1"/>
</dbReference>
<dbReference type="InterPro" id="IPR001971">
    <property type="entry name" value="Ribosomal_uS11"/>
</dbReference>
<dbReference type="InterPro" id="IPR019981">
    <property type="entry name" value="Ribosomal_uS11_bac-type"/>
</dbReference>
<dbReference type="InterPro" id="IPR018102">
    <property type="entry name" value="Ribosomal_uS11_CS"/>
</dbReference>
<dbReference type="InterPro" id="IPR036967">
    <property type="entry name" value="Ribosomal_uS11_sf"/>
</dbReference>
<dbReference type="NCBIfam" id="NF003698">
    <property type="entry name" value="PRK05309.1"/>
    <property type="match status" value="1"/>
</dbReference>
<dbReference type="NCBIfam" id="TIGR03632">
    <property type="entry name" value="uS11_bact"/>
    <property type="match status" value="1"/>
</dbReference>
<dbReference type="PANTHER" id="PTHR11759">
    <property type="entry name" value="40S RIBOSOMAL PROTEIN S14/30S RIBOSOMAL PROTEIN S11"/>
    <property type="match status" value="1"/>
</dbReference>
<dbReference type="Pfam" id="PF00411">
    <property type="entry name" value="Ribosomal_S11"/>
    <property type="match status" value="1"/>
</dbReference>
<dbReference type="PIRSF" id="PIRSF002131">
    <property type="entry name" value="Ribosomal_S11"/>
    <property type="match status" value="1"/>
</dbReference>
<dbReference type="SUPFAM" id="SSF53137">
    <property type="entry name" value="Translational machinery components"/>
    <property type="match status" value="1"/>
</dbReference>
<dbReference type="PROSITE" id="PS00054">
    <property type="entry name" value="RIBOSOMAL_S11"/>
    <property type="match status" value="1"/>
</dbReference>
<comment type="function">
    <text evidence="1">Located on the platform of the 30S subunit, it bridges several disparate RNA helices of the 16S rRNA. Forms part of the Shine-Dalgarno cleft in the 70S ribosome.</text>
</comment>
<comment type="subunit">
    <text evidence="1">Part of the 30S ribosomal subunit. Interacts with proteins S7 and S18. Binds to IF-3.</text>
</comment>
<comment type="similarity">
    <text evidence="1">Belongs to the universal ribosomal protein uS11 family.</text>
</comment>
<gene>
    <name evidence="1" type="primary">rpsK</name>
    <name type="ordered locus">OB0144</name>
</gene>
<accession>P59373</accession>
<feature type="chain" id="PRO_0000123190" description="Small ribosomal subunit protein uS11">
    <location>
        <begin position="1"/>
        <end position="129"/>
    </location>
</feature>
<name>RS11_OCEIH</name>
<evidence type="ECO:0000255" key="1">
    <source>
        <dbReference type="HAMAP-Rule" id="MF_01310"/>
    </source>
</evidence>
<evidence type="ECO:0000305" key="2"/>
<sequence length="129" mass="13682">MARKTNTRKRRVKKNIESGIAHIRSTFNNTIVTITDTRGNAIGWSSAGALGFKGSKKSTPFAAQMAAETAAKSAIENGMKTLEVTVKGPGAGREAAIRSLQAAGLEVTAIVDVTPVPHNGCRPPKRRRV</sequence>
<protein>
    <recommendedName>
        <fullName evidence="1">Small ribosomal subunit protein uS11</fullName>
    </recommendedName>
    <alternativeName>
        <fullName evidence="2">30S ribosomal protein S11</fullName>
    </alternativeName>
</protein>